<accession>O42690</accession>
<gene>
    <name type="primary">CDR3</name>
</gene>
<dbReference type="EMBL" id="U89714">
    <property type="protein sequence ID" value="AAC49886.1"/>
    <property type="molecule type" value="Genomic_DNA"/>
</dbReference>
<dbReference type="SMR" id="O42690"/>
<dbReference type="GlyCosmos" id="O42690">
    <property type="glycosylation" value="1 site, No reported glycans"/>
</dbReference>
<dbReference type="VEuPathDB" id="FungiDB:C1_08070W_A"/>
<dbReference type="VEuPathDB" id="FungiDB:CAWG_03447"/>
<dbReference type="GO" id="GO:0016020">
    <property type="term" value="C:membrane"/>
    <property type="evidence" value="ECO:0007669"/>
    <property type="project" value="UniProtKB-SubCell"/>
</dbReference>
<dbReference type="GO" id="GO:0140359">
    <property type="term" value="F:ABC-type transporter activity"/>
    <property type="evidence" value="ECO:0007669"/>
    <property type="project" value="InterPro"/>
</dbReference>
<dbReference type="GO" id="GO:0005524">
    <property type="term" value="F:ATP binding"/>
    <property type="evidence" value="ECO:0007669"/>
    <property type="project" value="UniProtKB-KW"/>
</dbReference>
<dbReference type="GO" id="GO:0016887">
    <property type="term" value="F:ATP hydrolysis activity"/>
    <property type="evidence" value="ECO:0007669"/>
    <property type="project" value="InterPro"/>
</dbReference>
<dbReference type="GO" id="GO:1990961">
    <property type="term" value="P:xenobiotic detoxification by transmembrane export across the plasma membrane"/>
    <property type="evidence" value="ECO:0007669"/>
    <property type="project" value="InterPro"/>
</dbReference>
<dbReference type="CDD" id="cd03233">
    <property type="entry name" value="ABCG_PDR_domain1"/>
    <property type="match status" value="1"/>
</dbReference>
<dbReference type="CDD" id="cd03232">
    <property type="entry name" value="ABCG_PDR_domain2"/>
    <property type="match status" value="1"/>
</dbReference>
<dbReference type="FunFam" id="3.40.50.300:FF:000054">
    <property type="entry name" value="ABC multidrug transporter atrF"/>
    <property type="match status" value="1"/>
</dbReference>
<dbReference type="Gene3D" id="3.40.50.300">
    <property type="entry name" value="P-loop containing nucleotide triphosphate hydrolases"/>
    <property type="match status" value="2"/>
</dbReference>
<dbReference type="InterPro" id="IPR003593">
    <property type="entry name" value="AAA+_ATPase"/>
</dbReference>
<dbReference type="InterPro" id="IPR013525">
    <property type="entry name" value="ABC2_TM"/>
</dbReference>
<dbReference type="InterPro" id="IPR029481">
    <property type="entry name" value="ABC_trans_N"/>
</dbReference>
<dbReference type="InterPro" id="IPR003439">
    <property type="entry name" value="ABC_transporter-like_ATP-bd"/>
</dbReference>
<dbReference type="InterPro" id="IPR017871">
    <property type="entry name" value="ABC_transporter-like_CS"/>
</dbReference>
<dbReference type="InterPro" id="IPR034001">
    <property type="entry name" value="ABCG_PDR_1"/>
</dbReference>
<dbReference type="InterPro" id="IPR034003">
    <property type="entry name" value="ABCG_PDR_2"/>
</dbReference>
<dbReference type="InterPro" id="IPR005285">
    <property type="entry name" value="Drug-R_PDR/CDR"/>
</dbReference>
<dbReference type="InterPro" id="IPR027417">
    <property type="entry name" value="P-loop_NTPase"/>
</dbReference>
<dbReference type="InterPro" id="IPR010929">
    <property type="entry name" value="PDR_CDR_ABC"/>
</dbReference>
<dbReference type="NCBIfam" id="TIGR00956">
    <property type="entry name" value="3a01205"/>
    <property type="match status" value="1"/>
</dbReference>
<dbReference type="PANTHER" id="PTHR19241">
    <property type="entry name" value="ATP-BINDING CASSETTE TRANSPORTER"/>
    <property type="match status" value="1"/>
</dbReference>
<dbReference type="Pfam" id="PF01061">
    <property type="entry name" value="ABC2_membrane"/>
    <property type="match status" value="2"/>
</dbReference>
<dbReference type="Pfam" id="PF00005">
    <property type="entry name" value="ABC_tran"/>
    <property type="match status" value="2"/>
</dbReference>
<dbReference type="Pfam" id="PF14510">
    <property type="entry name" value="ABC_trans_N"/>
    <property type="match status" value="1"/>
</dbReference>
<dbReference type="Pfam" id="PF06422">
    <property type="entry name" value="PDR_CDR"/>
    <property type="match status" value="1"/>
</dbReference>
<dbReference type="SMART" id="SM00382">
    <property type="entry name" value="AAA"/>
    <property type="match status" value="2"/>
</dbReference>
<dbReference type="SUPFAM" id="SSF52540">
    <property type="entry name" value="P-loop containing nucleoside triphosphate hydrolases"/>
    <property type="match status" value="2"/>
</dbReference>
<dbReference type="PROSITE" id="PS00211">
    <property type="entry name" value="ABC_TRANSPORTER_1"/>
    <property type="match status" value="1"/>
</dbReference>
<dbReference type="PROSITE" id="PS50893">
    <property type="entry name" value="ABC_TRANSPORTER_2"/>
    <property type="match status" value="2"/>
</dbReference>
<feature type="chain" id="PRO_0000093437" description="Opaque-specific ABC transporter CDR3">
    <location>
        <begin position="1"/>
        <end position="1501"/>
    </location>
</feature>
<feature type="topological domain" description="Cytoplasmic" evidence="1">
    <location>
        <begin position="1"/>
        <end position="502"/>
    </location>
</feature>
<feature type="transmembrane region" description="Helical" evidence="1">
    <location>
        <begin position="503"/>
        <end position="523"/>
    </location>
</feature>
<feature type="transmembrane region" description="Helical" evidence="1">
    <location>
        <begin position="540"/>
        <end position="560"/>
    </location>
</feature>
<feature type="transmembrane region" description="Helical" evidence="1">
    <location>
        <begin position="589"/>
        <end position="609"/>
    </location>
</feature>
<feature type="transmembrane region" description="Helical" evidence="1">
    <location>
        <begin position="614"/>
        <end position="634"/>
    </location>
</feature>
<feature type="transmembrane region" description="Helical" evidence="1">
    <location>
        <begin position="653"/>
        <end position="673"/>
    </location>
</feature>
<feature type="transmembrane region" description="Helical" evidence="1">
    <location>
        <begin position="755"/>
        <end position="775"/>
    </location>
</feature>
<feature type="topological domain" description="Cytoplasmic" evidence="1">
    <location>
        <begin position="776"/>
        <end position="1175"/>
    </location>
</feature>
<feature type="transmembrane region" description="Helical" evidence="1">
    <location>
        <begin position="1176"/>
        <end position="1196"/>
    </location>
</feature>
<feature type="transmembrane region" description="Helical" evidence="1">
    <location>
        <begin position="1212"/>
        <end position="1232"/>
    </location>
</feature>
<feature type="transmembrane region" description="Helical" evidence="1">
    <location>
        <begin position="1261"/>
        <end position="1281"/>
    </location>
</feature>
<feature type="transmembrane region" description="Helical" evidence="1">
    <location>
        <begin position="1297"/>
        <end position="1317"/>
    </location>
</feature>
<feature type="transmembrane region" description="Helical" evidence="1">
    <location>
        <begin position="1325"/>
        <end position="1345"/>
    </location>
</feature>
<feature type="transmembrane region" description="Helical" evidence="1">
    <location>
        <begin position="1353"/>
        <end position="1375"/>
    </location>
</feature>
<feature type="transmembrane region" description="Helical" evidence="1">
    <location>
        <begin position="1451"/>
        <end position="1471"/>
    </location>
</feature>
<feature type="domain" description="ABC transporter 1" evidence="2">
    <location>
        <begin position="140"/>
        <end position="395"/>
    </location>
</feature>
<feature type="domain" description="ABC transporter 2" evidence="2">
    <location>
        <begin position="840"/>
        <end position="1083"/>
    </location>
</feature>
<feature type="region of interest" description="Disordered" evidence="3">
    <location>
        <begin position="58"/>
        <end position="87"/>
    </location>
</feature>
<feature type="binding site" evidence="2">
    <location>
        <begin position="876"/>
        <end position="883"/>
    </location>
    <ligand>
        <name>ATP</name>
        <dbReference type="ChEBI" id="CHEBI:30616"/>
    </ligand>
</feature>
<feature type="glycosylation site" description="N-linked (GlcNAc...) asparagine" evidence="1">
    <location>
        <position position="530"/>
    </location>
</feature>
<organism>
    <name type="scientific">Candida albicans</name>
    <name type="common">Yeast</name>
    <dbReference type="NCBI Taxonomy" id="5476"/>
    <lineage>
        <taxon>Eukaryota</taxon>
        <taxon>Fungi</taxon>
        <taxon>Dikarya</taxon>
        <taxon>Ascomycota</taxon>
        <taxon>Saccharomycotina</taxon>
        <taxon>Pichiomycetes</taxon>
        <taxon>Debaryomycetaceae</taxon>
        <taxon>Candida/Lodderomyces clade</taxon>
        <taxon>Candida</taxon>
    </lineage>
</organism>
<name>CDR3_CANAX</name>
<reference key="1">
    <citation type="journal article" date="1997" name="J. Bacteriol.">
        <title>The Candida albicans CDR3 gene codes for an opaque-phase ABC transporter.</title>
        <authorList>
            <person name="Balan I."/>
            <person name="Alarco A.-M."/>
            <person name="Raymond M."/>
        </authorList>
    </citation>
    <scope>NUCLEOTIDE SEQUENCE [GENOMIC DNA]</scope>
    <source>
        <strain>1006</strain>
    </source>
</reference>
<comment type="subcellular location">
    <subcellularLocation>
        <location evidence="4">Membrane</location>
        <topology evidence="4">Multi-pass membrane protein</topology>
    </subcellularLocation>
</comment>
<comment type="developmental stage">
    <text>Regulated in a cell-type-specific manner with high levels in WO-1 opaque cells and undetectable levels in WO-1 white cells.</text>
</comment>
<comment type="similarity">
    <text evidence="4">Belongs to the ABC transporter superfamily. ABCG family. PDR (TC 3.A.1.205) subfamily.</text>
</comment>
<protein>
    <recommendedName>
        <fullName>Opaque-specific ABC transporter CDR3</fullName>
    </recommendedName>
</protein>
<keyword id="KW-0067">ATP-binding</keyword>
<keyword id="KW-0325">Glycoprotein</keyword>
<keyword id="KW-0472">Membrane</keyword>
<keyword id="KW-0547">Nucleotide-binding</keyword>
<keyword id="KW-0677">Repeat</keyword>
<keyword id="KW-0812">Transmembrane</keyword>
<keyword id="KW-1133">Transmembrane helix</keyword>
<keyword id="KW-0813">Transport</keyword>
<sequence length="1501" mass="170271">MAKTSQAEGQPYKGYYNNKSQGQPYHGYYSGFNKSASAQIHHLARSLTQGVQSHYDDTYTTATMHPNGINPISDKTDPTLDPESPSFSSKRWVQNMWKLYQSDSEYYKPGKLGVAYKNLRVYGDAIESDYQTTVSNGVLKYARNIFNKFRKDNDDYSFDILKPMEGLIKPGEVTVVLGRPGAGCSTFLKTIACRTEGFHVADGSVISYDGITQDEIRNHLRGEVVYCAETETHFPNLTVGETLEFAALMKTPQNRPMGVSREEYAKHVVDVVMATYGLSHTKNTKVGNDFIRGISGGERKRLSIAEVTLVQASIQCWDNSTRGLDAATALEFISSLKTSASILNDTPLIAIYQCSQNAYDLFDKVIVMYEGYQIFFGSSQRAAAYFKKMGFVCQDRQTTPDFLTSITSPAERIIKPGYERLVPRTPKEFYRYWRRSPERQALLEEIDEYLDNCENYDQKQKIFEANNAKKAKHTYNKSSYTVSLPMQVRYIMKRYWDRMRGDIIVPLSTVAGNIAMALILSSVFYNLQPNSSSFYYRTSVMYYALLFNAYSSVLEIYNMYEGRAIVQKHREYALYPPMADAIGSIISDFPLKVVCSVLFNLILYFMVNFKREPGAFFFYLLISFCSTLFMSHLFRTIGAFTNSLAEAMTPSSLLLFALSTFSGFAIPVTYMLGWCKWIRWVNPLAYAYEALISNEFHGRVFDCSNIVPSGFGYPKTGNSVVCASIGALPGEFKVDGDLYLKLAFDYSYSNVWRNFGVLMAFIIFLFGTTIFFVQTNKSSISKGETLVFRRKNIRKMRKMEEDEEAYMDGMAPLDFSGSTEISDYSYDYMDRKLLDTSNIFHWRNLTYTVKIKSEERVILNNIDGWVKPGEVTALMGASGAGKTTLLNALSERLTTGVITSGTRMVNGGELDSSFQRSIGYVQQQDLHLETSTVREALKFSARLRQPNSVSIAEKDSYVEKIIDLLEMRTYVDAIVGVPGEGLNVEQRKRLTIAVELVARPKLLVFLDEPTSGLDSQTAWSICKLIRKLANHGQAILCTIHQPSAILLEEFDRLLLLQKGETVYFGEFGANCHTLIEYFERNGASKCPQHANPAEWMLGVIGAAPGTQANQDYFETWRNSPEYRAVQNELHRLEEMPGLASGEKEPDTNQAYAASFWKQYIFVVHRLFQQYWRTPSYIYSKFAMAVLCSLFNGFTYYKSQNSMQGLKNQMLSIFSMFVVLTTLAQQYVPLFVTQRDLYEARERPSKTFSWLAFIAAQITAEIPYQVLAATISFFSWYYPVGLYRNAVYSGAVTHRGVLMWLIMTLMFIYSSTLAQFCISWNQLADYAANWISLLLTISMIFCGVIATKDSMPKFWVFLYRCTPLTYLTSAMMSIGLGDSFVKCAPTEILTFPPQTPGVQKCQDYMGAYISIAGGYLLNPEATDNCKFCIMDKTNQFLDFMNISIHNFGRDTGIFIVFIVFNMAATVFSYWLFRVPKGNREKGSFFDKLPFLNGGGDTNHENV</sequence>
<evidence type="ECO:0000255" key="1"/>
<evidence type="ECO:0000255" key="2">
    <source>
        <dbReference type="PROSITE-ProRule" id="PRU00434"/>
    </source>
</evidence>
<evidence type="ECO:0000256" key="3">
    <source>
        <dbReference type="SAM" id="MobiDB-lite"/>
    </source>
</evidence>
<evidence type="ECO:0000305" key="4"/>
<proteinExistence type="evidence at transcript level"/>